<comment type="function">
    <text evidence="1">This protein binds specifically to 23S rRNA.</text>
</comment>
<comment type="function">
    <text evidence="1">The globular domain of the protein is located near the polypeptide exit tunnel on the outside of the subunit, while an extended beta-hairpin is found that lines the wall of the exit tunnel in the center of the 70S ribosome.</text>
</comment>
<comment type="subunit">
    <text evidence="1">Part of the 50S ribosomal subunit.</text>
</comment>
<comment type="subcellular location">
    <subcellularLocation>
        <location>Plastid</location>
        <location>Chloroplast</location>
    </subcellularLocation>
</comment>
<comment type="similarity">
    <text evidence="2">Belongs to the universal ribosomal protein uL22 family.</text>
</comment>
<dbReference type="EMBL" id="AP004638">
    <property type="protein sequence ID" value="BAB84256.1"/>
    <property type="molecule type" value="Genomic_DNA"/>
</dbReference>
<dbReference type="RefSeq" id="NP_569668.1">
    <property type="nucleotide sequence ID" value="NC_003386.1"/>
</dbReference>
<dbReference type="SMR" id="Q8WHY3"/>
<dbReference type="GeneID" id="2545160"/>
<dbReference type="GO" id="GO:0009507">
    <property type="term" value="C:chloroplast"/>
    <property type="evidence" value="ECO:0007669"/>
    <property type="project" value="UniProtKB-SubCell"/>
</dbReference>
<dbReference type="GO" id="GO:0015934">
    <property type="term" value="C:large ribosomal subunit"/>
    <property type="evidence" value="ECO:0007669"/>
    <property type="project" value="InterPro"/>
</dbReference>
<dbReference type="GO" id="GO:0019843">
    <property type="term" value="F:rRNA binding"/>
    <property type="evidence" value="ECO:0007669"/>
    <property type="project" value="UniProtKB-UniRule"/>
</dbReference>
<dbReference type="GO" id="GO:0003735">
    <property type="term" value="F:structural constituent of ribosome"/>
    <property type="evidence" value="ECO:0007669"/>
    <property type="project" value="InterPro"/>
</dbReference>
<dbReference type="GO" id="GO:0006412">
    <property type="term" value="P:translation"/>
    <property type="evidence" value="ECO:0007669"/>
    <property type="project" value="UniProtKB-UniRule"/>
</dbReference>
<dbReference type="CDD" id="cd00336">
    <property type="entry name" value="Ribosomal_L22"/>
    <property type="match status" value="1"/>
</dbReference>
<dbReference type="Gene3D" id="3.90.470.10">
    <property type="entry name" value="Ribosomal protein L22/L17"/>
    <property type="match status" value="1"/>
</dbReference>
<dbReference type="HAMAP" id="MF_01331_B">
    <property type="entry name" value="Ribosomal_uL22_B"/>
    <property type="match status" value="1"/>
</dbReference>
<dbReference type="InterPro" id="IPR001063">
    <property type="entry name" value="Ribosomal_uL22"/>
</dbReference>
<dbReference type="InterPro" id="IPR005727">
    <property type="entry name" value="Ribosomal_uL22_bac/chlpt-type"/>
</dbReference>
<dbReference type="InterPro" id="IPR047867">
    <property type="entry name" value="Ribosomal_uL22_bac/org-type"/>
</dbReference>
<dbReference type="InterPro" id="IPR018260">
    <property type="entry name" value="Ribosomal_uL22_CS"/>
</dbReference>
<dbReference type="InterPro" id="IPR036394">
    <property type="entry name" value="Ribosomal_uL22_sf"/>
</dbReference>
<dbReference type="NCBIfam" id="TIGR01044">
    <property type="entry name" value="rplV_bact"/>
    <property type="match status" value="1"/>
</dbReference>
<dbReference type="PANTHER" id="PTHR13501">
    <property type="entry name" value="CHLOROPLAST 50S RIBOSOMAL PROTEIN L22-RELATED"/>
    <property type="match status" value="1"/>
</dbReference>
<dbReference type="PANTHER" id="PTHR13501:SF10">
    <property type="entry name" value="LARGE RIBOSOMAL SUBUNIT PROTEIN UL22M"/>
    <property type="match status" value="1"/>
</dbReference>
<dbReference type="Pfam" id="PF00237">
    <property type="entry name" value="Ribosomal_L22"/>
    <property type="match status" value="1"/>
</dbReference>
<dbReference type="SUPFAM" id="SSF54843">
    <property type="entry name" value="Ribosomal protein L22"/>
    <property type="match status" value="1"/>
</dbReference>
<dbReference type="PROSITE" id="PS00464">
    <property type="entry name" value="RIBOSOMAL_L22"/>
    <property type="match status" value="1"/>
</dbReference>
<protein>
    <recommendedName>
        <fullName evidence="2">Large ribosomal subunit protein uL22c</fullName>
    </recommendedName>
    <alternativeName>
        <fullName>50S ribosomal protein L22, chloroplastic</fullName>
    </alternativeName>
</protein>
<accession>Q8WHY3</accession>
<name>RK22_PSINU</name>
<organism>
    <name type="scientific">Psilotum nudum</name>
    <name type="common">Whisk fern</name>
    <name type="synonym">Lycopodium nudum</name>
    <dbReference type="NCBI Taxonomy" id="3240"/>
    <lineage>
        <taxon>Eukaryota</taxon>
        <taxon>Viridiplantae</taxon>
        <taxon>Streptophyta</taxon>
        <taxon>Embryophyta</taxon>
        <taxon>Tracheophyta</taxon>
        <taxon>Polypodiopsida</taxon>
        <taxon>Ophioglossidae</taxon>
        <taxon>Psilotales</taxon>
        <taxon>Psilotaceae</taxon>
        <taxon>Psilotum</taxon>
    </lineage>
</organism>
<proteinExistence type="inferred from homology"/>
<feature type="chain" id="PRO_0000125324" description="Large ribosomal subunit protein uL22c">
    <location>
        <begin position="1"/>
        <end position="116"/>
    </location>
</feature>
<evidence type="ECO:0000250" key="1"/>
<evidence type="ECO:0000305" key="2"/>
<geneLocation type="chloroplast"/>
<gene>
    <name type="primary">rpl22</name>
</gene>
<reference key="1">
    <citation type="journal article" date="2004" name="Mol. Biol. Evol.">
        <title>Chloroplast phylogeny indicates that bryophytes are monophyletic.</title>
        <authorList>
            <person name="Nishiyama T."/>
            <person name="Wolf P.G."/>
            <person name="Kugita M."/>
            <person name="Sinclair R.B."/>
            <person name="Sugita M."/>
            <person name="Sugiura C."/>
            <person name="Wakasugi T."/>
            <person name="Yamada K."/>
            <person name="Yoshinaga K."/>
            <person name="Yamaguchi K."/>
            <person name="Ueda K."/>
            <person name="Hasebe M."/>
        </authorList>
    </citation>
    <scope>NUCLEOTIDE SEQUENCE [LARGE SCALE GENOMIC DNA]</scope>
    <source>
        <strain>Kingyoku</strain>
    </source>
</reference>
<sequence>MEKKKEVRALAKYVKMSAHKVRRVINQIRGRSYEEALISLEFLPYRACYPLLQLVSSAAANANNNLGLKKDTLLISEAKVDEASVSKRFQPRAQGRAYSIQKDTCHITIKIRERSK</sequence>
<keyword id="KW-0150">Chloroplast</keyword>
<keyword id="KW-0934">Plastid</keyword>
<keyword id="KW-0687">Ribonucleoprotein</keyword>
<keyword id="KW-0689">Ribosomal protein</keyword>
<keyword id="KW-0694">RNA-binding</keyword>
<keyword id="KW-0699">rRNA-binding</keyword>